<organism>
    <name type="scientific">Danio rerio</name>
    <name type="common">Zebrafish</name>
    <name type="synonym">Brachydanio rerio</name>
    <dbReference type="NCBI Taxonomy" id="7955"/>
    <lineage>
        <taxon>Eukaryota</taxon>
        <taxon>Metazoa</taxon>
        <taxon>Chordata</taxon>
        <taxon>Craniata</taxon>
        <taxon>Vertebrata</taxon>
        <taxon>Euteleostomi</taxon>
        <taxon>Actinopterygii</taxon>
        <taxon>Neopterygii</taxon>
        <taxon>Teleostei</taxon>
        <taxon>Ostariophysi</taxon>
        <taxon>Cypriniformes</taxon>
        <taxon>Danionidae</taxon>
        <taxon>Danioninae</taxon>
        <taxon>Danio</taxon>
    </lineage>
</organism>
<sequence length="372" mass="41380">MPGVNTQTLYGWDMEHYFYDEMDTEEDFFKSTAPSEDIWKKFELLPTPPMSPSRTLDGDWLFPIPGDRLGWAPPKVLTCDEEYEGLHKFDPLDIFGNLGSIVIKDCMWSGLSTSHRLEKVAHGERAPVAALIQNSTAQKAARAASGTPVTGSQAAQCVSPAAVLELPVPHKKVAAGSSGSECRSDSSDDDEDDDEIDVVTVDNRPKRGRPPSRRTPVTITVSADPFGPCPKRFHVSLHRQQHNYAAPSPDTDPEDDFEIEPVSKRPRLESSSAPSSPLSSPATSDSEDSTEQRRNFLERKRRDDLRSRFQALREEIPGLSGSSKTSKVAILTQATDYLLQLHSSQRRQAQEKRKLKAKQQQLLRRISALQNS</sequence>
<gene>
    <name evidence="7" type="primary">mycl1a</name>
    <name type="synonym">lmyc1</name>
    <name type="synonym">mycl1</name>
    <name type="ORF">zgc:85967</name>
</gene>
<name>MCL1A_DANRE</name>
<dbReference type="EMBL" id="BC067723">
    <property type="protein sequence ID" value="AAH67723.1"/>
    <property type="molecule type" value="mRNA"/>
</dbReference>
<dbReference type="PIR" id="E48059">
    <property type="entry name" value="E48059"/>
</dbReference>
<dbReference type="RefSeq" id="NP_998102.1">
    <property type="nucleotide sequence ID" value="NM_212937.1"/>
</dbReference>
<dbReference type="SMR" id="Q9PSI9"/>
<dbReference type="STRING" id="7955.ENSDARP00000011307"/>
<dbReference type="PaxDb" id="7955-ENSDARP00000011307"/>
<dbReference type="Ensembl" id="ENSDART00000013961">
    <property type="protein sequence ID" value="ENSDARP00000011307"/>
    <property type="gene ID" value="ENSDARG00000006003"/>
</dbReference>
<dbReference type="GeneID" id="405873"/>
<dbReference type="KEGG" id="dre:405873"/>
<dbReference type="AGR" id="ZFIN:ZDB-GENE-040426-2439"/>
<dbReference type="CTD" id="405873"/>
<dbReference type="ZFIN" id="ZDB-GENE-040426-2439">
    <property type="gene designation" value="mycla"/>
</dbReference>
<dbReference type="eggNOG" id="ENOG502QWSU">
    <property type="taxonomic scope" value="Eukaryota"/>
</dbReference>
<dbReference type="HOGENOM" id="CLU_052560_0_0_1"/>
<dbReference type="InParanoid" id="Q9PSI9"/>
<dbReference type="OMA" id="ADPHGPC"/>
<dbReference type="OrthoDB" id="5964374at2759"/>
<dbReference type="PhylomeDB" id="Q9PSI9"/>
<dbReference type="TreeFam" id="TF106001"/>
<dbReference type="PRO" id="PR:Q9PSI9"/>
<dbReference type="Proteomes" id="UP000000437">
    <property type="component" value="Chromosome 13"/>
</dbReference>
<dbReference type="Bgee" id="ENSDARG00000006003">
    <property type="expression patterns" value="Expressed in cleaving embryo and 43 other cell types or tissues"/>
</dbReference>
<dbReference type="ExpressionAtlas" id="Q9PSI9">
    <property type="expression patterns" value="baseline and differential"/>
</dbReference>
<dbReference type="GO" id="GO:0005634">
    <property type="term" value="C:nucleus"/>
    <property type="evidence" value="ECO:0007669"/>
    <property type="project" value="UniProtKB-SubCell"/>
</dbReference>
<dbReference type="GO" id="GO:0000981">
    <property type="term" value="F:DNA-binding transcription factor activity, RNA polymerase II-specific"/>
    <property type="evidence" value="ECO:0000318"/>
    <property type="project" value="GO_Central"/>
</dbReference>
<dbReference type="GO" id="GO:0046983">
    <property type="term" value="F:protein dimerization activity"/>
    <property type="evidence" value="ECO:0007669"/>
    <property type="project" value="InterPro"/>
</dbReference>
<dbReference type="GO" id="GO:0000978">
    <property type="term" value="F:RNA polymerase II cis-regulatory region sequence-specific DNA binding"/>
    <property type="evidence" value="ECO:0000318"/>
    <property type="project" value="GO_Central"/>
</dbReference>
<dbReference type="GO" id="GO:0006357">
    <property type="term" value="P:regulation of transcription by RNA polymerase II"/>
    <property type="evidence" value="ECO:0000318"/>
    <property type="project" value="GO_Central"/>
</dbReference>
<dbReference type="CDD" id="cd11457">
    <property type="entry name" value="bHLHzip_L-Myc"/>
    <property type="match status" value="1"/>
</dbReference>
<dbReference type="FunFam" id="4.10.280.10:FF:000019">
    <property type="entry name" value="Myc proto-oncogene protein"/>
    <property type="match status" value="1"/>
</dbReference>
<dbReference type="Gene3D" id="4.10.280.10">
    <property type="entry name" value="Helix-loop-helix DNA-binding domain"/>
    <property type="match status" value="1"/>
</dbReference>
<dbReference type="InterPro" id="IPR011598">
    <property type="entry name" value="bHLH_dom"/>
</dbReference>
<dbReference type="InterPro" id="IPR036638">
    <property type="entry name" value="HLH_DNA-bd_sf"/>
</dbReference>
<dbReference type="InterPro" id="IPR050433">
    <property type="entry name" value="Myc_transcription_factors"/>
</dbReference>
<dbReference type="InterPro" id="IPR002418">
    <property type="entry name" value="Tscrpt_reg_Myc"/>
</dbReference>
<dbReference type="InterPro" id="IPR012682">
    <property type="entry name" value="Tscrpt_reg_Myc_N"/>
</dbReference>
<dbReference type="PANTHER" id="PTHR45851">
    <property type="entry name" value="MYC PROTO-ONCOGENE"/>
    <property type="match status" value="1"/>
</dbReference>
<dbReference type="Pfam" id="PF00010">
    <property type="entry name" value="HLH"/>
    <property type="match status" value="1"/>
</dbReference>
<dbReference type="Pfam" id="PF01056">
    <property type="entry name" value="Myc_N"/>
    <property type="match status" value="2"/>
</dbReference>
<dbReference type="PIRSF" id="PIRSF001705">
    <property type="entry name" value="Myc_protein"/>
    <property type="match status" value="1"/>
</dbReference>
<dbReference type="PRINTS" id="PR00044">
    <property type="entry name" value="LEUZIPPRMYC"/>
</dbReference>
<dbReference type="SMART" id="SM00353">
    <property type="entry name" value="HLH"/>
    <property type="match status" value="1"/>
</dbReference>
<dbReference type="SUPFAM" id="SSF47459">
    <property type="entry name" value="HLH, helix-loop-helix DNA-binding domain"/>
    <property type="match status" value="1"/>
</dbReference>
<dbReference type="PROSITE" id="PS50888">
    <property type="entry name" value="BHLH"/>
    <property type="match status" value="1"/>
</dbReference>
<evidence type="ECO:0000250" key="1"/>
<evidence type="ECO:0000250" key="2">
    <source>
        <dbReference type="UniProtKB" id="P12524"/>
    </source>
</evidence>
<evidence type="ECO:0000255" key="3">
    <source>
        <dbReference type="PROSITE-ProRule" id="PRU00981"/>
    </source>
</evidence>
<evidence type="ECO:0000256" key="4">
    <source>
        <dbReference type="SAM" id="MobiDB-lite"/>
    </source>
</evidence>
<evidence type="ECO:0000269" key="5">
    <source>
    </source>
</evidence>
<evidence type="ECO:0000305" key="6"/>
<evidence type="ECO:0000312" key="7">
    <source>
        <dbReference type="EMBL" id="AAH67723.1"/>
    </source>
</evidence>
<protein>
    <recommendedName>
        <fullName>Protein L-Myc-1a</fullName>
    </recommendedName>
    <alternativeName>
        <fullName>Protein L-Myc 1</fullName>
        <shortName>zL-Myc</shortName>
    </alternativeName>
</protein>
<accession>Q9PSI9</accession>
<accession>Q6NW51</accession>
<keyword id="KW-0238">DNA-binding</keyword>
<keyword id="KW-0539">Nucleus</keyword>
<keyword id="KW-1185">Reference proteome</keyword>
<reference evidence="7" key="1">
    <citation type="submission" date="2004-03" db="EMBL/GenBank/DDBJ databases">
        <authorList>
            <consortium name="NIH - Zebrafish Gene Collection (ZGC) project"/>
        </authorList>
    </citation>
    <scope>NUCLEOTIDE SEQUENCE [LARGE SCALE MRNA]</scope>
    <source>
        <tissue evidence="7">Embryo</tissue>
    </source>
</reference>
<reference evidence="6" key="2">
    <citation type="journal article" date="1993" name="Mol. Cell. Biol.">
        <title>Zebra fish myc family and max genes: differential expression and oncogenic activity throughout vertebrate evolution.</title>
        <authorList>
            <person name="Schreiber-Agus N."/>
            <person name="Horner J."/>
            <person name="Torres R."/>
            <person name="Chiu F.-C."/>
            <person name="DePinho R.A."/>
        </authorList>
    </citation>
    <scope>NUCLEOTIDE SEQUENCE [GENOMIC DNA / MRNA] OF 36-113</scope>
    <scope>TISSUE SPECIFICITY</scope>
    <scope>DEVELOPMENTAL STAGE</scope>
    <source>
        <tissue evidence="5">Embryo</tissue>
    </source>
</reference>
<proteinExistence type="evidence at transcript level"/>
<feature type="chain" id="PRO_0000127336" description="Protein L-Myc-1a">
    <location>
        <begin position="1"/>
        <end position="372"/>
    </location>
</feature>
<feature type="domain" description="bHLH" evidence="3">
    <location>
        <begin position="289"/>
        <end position="341"/>
    </location>
</feature>
<feature type="region of interest" description="Disordered" evidence="4">
    <location>
        <begin position="172"/>
        <end position="226"/>
    </location>
</feature>
<feature type="region of interest" description="Disordered" evidence="4">
    <location>
        <begin position="243"/>
        <end position="306"/>
    </location>
</feature>
<feature type="region of interest" description="Leucine-zipper">
    <location>
        <begin position="341"/>
        <end position="369"/>
    </location>
</feature>
<feature type="compositionally biased region" description="Acidic residues" evidence="4">
    <location>
        <begin position="187"/>
        <end position="197"/>
    </location>
</feature>
<feature type="compositionally biased region" description="Low complexity" evidence="4">
    <location>
        <begin position="269"/>
        <end position="284"/>
    </location>
</feature>
<feature type="compositionally biased region" description="Basic and acidic residues" evidence="4">
    <location>
        <begin position="290"/>
        <end position="306"/>
    </location>
</feature>
<feature type="sequence conflict" description="In Ref. 2." evidence="6" ref="2">
    <original>I</original>
    <variation>R</variation>
    <location>
        <position position="64"/>
    </location>
</feature>
<feature type="sequence conflict" description="In Ref. 2." evidence="6" ref="2">
    <original>LGWAPPKV</original>
    <variation>WVGAAEG</variation>
    <location>
        <begin position="69"/>
        <end position="76"/>
    </location>
</feature>
<comment type="subunit">
    <text evidence="1">Efficient DNA binding requires dimerization with another bHLH protein. Binds DNA as a heterodimer with max (By similarity).</text>
</comment>
<comment type="subcellular location">
    <subcellularLocation>
        <location evidence="2 3">Nucleus</location>
    </subcellularLocation>
</comment>
<comment type="tissue specificity">
    <text evidence="5">Uterus.</text>
</comment>
<comment type="developmental stage">
    <text evidence="5">Most abundant during early rapid cleavage, blastulation, and gastrulation. Reduced levels from time of establishment of the body plan (around 12 hours) and thereafter.</text>
</comment>